<evidence type="ECO:0000255" key="1">
    <source>
        <dbReference type="HAMAP-Rule" id="MF_00392"/>
    </source>
</evidence>
<name>LPXB_RHOP2</name>
<feature type="chain" id="PRO_0000255216" description="Lipid-A-disaccharide synthase">
    <location>
        <begin position="1"/>
        <end position="393"/>
    </location>
</feature>
<proteinExistence type="inferred from homology"/>
<keyword id="KW-0328">Glycosyltransferase</keyword>
<keyword id="KW-0441">Lipid A biosynthesis</keyword>
<keyword id="KW-0444">Lipid biosynthesis</keyword>
<keyword id="KW-0443">Lipid metabolism</keyword>
<keyword id="KW-1185">Reference proteome</keyword>
<keyword id="KW-0808">Transferase</keyword>
<protein>
    <recommendedName>
        <fullName evidence="1">Lipid-A-disaccharide synthase</fullName>
        <ecNumber evidence="1">2.4.1.182</ecNumber>
    </recommendedName>
</protein>
<gene>
    <name evidence="1" type="primary">lpxB</name>
    <name type="ordered locus">RPB_2815</name>
</gene>
<accession>Q2IW93</accession>
<sequence length="393" mass="43078">MRAANATTGAVRRLFLIATEESGDRLGAALMQALKTRLGDGVVFEGVGGRAMAEQGLVSLFPIEELSIMGISAVVRRLPSILRRIRSTADAVLGAKPDMLIIIDSPDFTHRVARRVRVRDPSIAIVNYVSPTVWAWRPGRARAMRRYVDHVLALLPFEPEEYRRLRGPPCTYVGHPLTEQIAHLRPSPAEQARRDAEPPVLVVLPGSRRSEIHHLMAVFGETLGRLQAEQGDLELILPTVPHLRDAVEAGVRDWPVQPRIVVGDADKKAAFRIARAAFAKSGTVTLELALAHVPMVAVYKAGAMEAWIGKRVIRSASVILANLVVGENVIPEFIQEDCVPDRLVPALREVLADTPMRARQLEGFGRIDDIMSTGAQTPSGRAADIVLNVLRKH</sequence>
<dbReference type="EC" id="2.4.1.182" evidence="1"/>
<dbReference type="EMBL" id="CP000250">
    <property type="protein sequence ID" value="ABD07517.1"/>
    <property type="molecule type" value="Genomic_DNA"/>
</dbReference>
<dbReference type="RefSeq" id="WP_011441702.1">
    <property type="nucleotide sequence ID" value="NC_007778.1"/>
</dbReference>
<dbReference type="SMR" id="Q2IW93"/>
<dbReference type="STRING" id="316058.RPB_2815"/>
<dbReference type="CAZy" id="GT19">
    <property type="family name" value="Glycosyltransferase Family 19"/>
</dbReference>
<dbReference type="KEGG" id="rpb:RPB_2815"/>
<dbReference type="eggNOG" id="COG0763">
    <property type="taxonomic scope" value="Bacteria"/>
</dbReference>
<dbReference type="HOGENOM" id="CLU_036577_3_0_5"/>
<dbReference type="OrthoDB" id="9801642at2"/>
<dbReference type="UniPathway" id="UPA00973"/>
<dbReference type="Proteomes" id="UP000008809">
    <property type="component" value="Chromosome"/>
</dbReference>
<dbReference type="GO" id="GO:0016020">
    <property type="term" value="C:membrane"/>
    <property type="evidence" value="ECO:0007669"/>
    <property type="project" value="GOC"/>
</dbReference>
<dbReference type="GO" id="GO:0008915">
    <property type="term" value="F:lipid-A-disaccharide synthase activity"/>
    <property type="evidence" value="ECO:0007669"/>
    <property type="project" value="UniProtKB-UniRule"/>
</dbReference>
<dbReference type="GO" id="GO:0005543">
    <property type="term" value="F:phospholipid binding"/>
    <property type="evidence" value="ECO:0007669"/>
    <property type="project" value="TreeGrafter"/>
</dbReference>
<dbReference type="GO" id="GO:0009245">
    <property type="term" value="P:lipid A biosynthetic process"/>
    <property type="evidence" value="ECO:0007669"/>
    <property type="project" value="UniProtKB-UniRule"/>
</dbReference>
<dbReference type="HAMAP" id="MF_00392">
    <property type="entry name" value="LpxB"/>
    <property type="match status" value="1"/>
</dbReference>
<dbReference type="InterPro" id="IPR003835">
    <property type="entry name" value="Glyco_trans_19"/>
</dbReference>
<dbReference type="NCBIfam" id="TIGR00215">
    <property type="entry name" value="lpxB"/>
    <property type="match status" value="1"/>
</dbReference>
<dbReference type="PANTHER" id="PTHR30372">
    <property type="entry name" value="LIPID-A-DISACCHARIDE SYNTHASE"/>
    <property type="match status" value="1"/>
</dbReference>
<dbReference type="PANTHER" id="PTHR30372:SF4">
    <property type="entry name" value="LIPID-A-DISACCHARIDE SYNTHASE, MITOCHONDRIAL-RELATED"/>
    <property type="match status" value="1"/>
</dbReference>
<dbReference type="Pfam" id="PF02684">
    <property type="entry name" value="LpxB"/>
    <property type="match status" value="1"/>
</dbReference>
<dbReference type="SUPFAM" id="SSF53756">
    <property type="entry name" value="UDP-Glycosyltransferase/glycogen phosphorylase"/>
    <property type="match status" value="1"/>
</dbReference>
<comment type="function">
    <text evidence="1">Condensation of UDP-2,3-diacylglucosamine and 2,3-diacylglucosamine-1-phosphate to form lipid A disaccharide, a precursor of lipid A, a phosphorylated glycolipid that anchors the lipopolysaccharide to the outer membrane of the cell.</text>
</comment>
<comment type="catalytic activity">
    <reaction evidence="1">
        <text>a lipid X + a UDP-2-N,3-O-bis[(3R)-3-hydroxyacyl]-alpha-D-glucosamine = a lipid A disaccharide + UDP + H(+)</text>
        <dbReference type="Rhea" id="RHEA:67828"/>
        <dbReference type="ChEBI" id="CHEBI:15378"/>
        <dbReference type="ChEBI" id="CHEBI:58223"/>
        <dbReference type="ChEBI" id="CHEBI:137748"/>
        <dbReference type="ChEBI" id="CHEBI:176338"/>
        <dbReference type="ChEBI" id="CHEBI:176343"/>
        <dbReference type="EC" id="2.4.1.182"/>
    </reaction>
</comment>
<comment type="pathway">
    <text evidence="1">Bacterial outer membrane biogenesis; LPS lipid A biosynthesis.</text>
</comment>
<comment type="similarity">
    <text evidence="1">Belongs to the LpxB family.</text>
</comment>
<organism>
    <name type="scientific">Rhodopseudomonas palustris (strain HaA2)</name>
    <dbReference type="NCBI Taxonomy" id="316058"/>
    <lineage>
        <taxon>Bacteria</taxon>
        <taxon>Pseudomonadati</taxon>
        <taxon>Pseudomonadota</taxon>
        <taxon>Alphaproteobacteria</taxon>
        <taxon>Hyphomicrobiales</taxon>
        <taxon>Nitrobacteraceae</taxon>
        <taxon>Rhodopseudomonas</taxon>
    </lineage>
</organism>
<reference key="1">
    <citation type="submission" date="2006-01" db="EMBL/GenBank/DDBJ databases">
        <title>Complete sequence of Rhodopseudomonas palustris HaA2.</title>
        <authorList>
            <consortium name="US DOE Joint Genome Institute"/>
            <person name="Copeland A."/>
            <person name="Lucas S."/>
            <person name="Lapidus A."/>
            <person name="Barry K."/>
            <person name="Detter J.C."/>
            <person name="Glavina T."/>
            <person name="Hammon N."/>
            <person name="Israni S."/>
            <person name="Pitluck S."/>
            <person name="Chain P."/>
            <person name="Malfatti S."/>
            <person name="Shin M."/>
            <person name="Vergez L."/>
            <person name="Schmutz J."/>
            <person name="Larimer F."/>
            <person name="Land M."/>
            <person name="Hauser L."/>
            <person name="Pelletier D.A."/>
            <person name="Kyrpides N."/>
            <person name="Anderson I."/>
            <person name="Oda Y."/>
            <person name="Harwood C.S."/>
            <person name="Richardson P."/>
        </authorList>
    </citation>
    <scope>NUCLEOTIDE SEQUENCE [LARGE SCALE GENOMIC DNA]</scope>
    <source>
        <strain>HaA2</strain>
    </source>
</reference>